<feature type="chain" id="PRO_1000185157" description="GTP cyclohydrolase FolE2">
    <location>
        <begin position="1"/>
        <end position="292"/>
    </location>
</feature>
<feature type="site" description="May be catalytically important" evidence="1">
    <location>
        <position position="176"/>
    </location>
</feature>
<protein>
    <recommendedName>
        <fullName evidence="1">GTP cyclohydrolase FolE2</fullName>
        <ecNumber evidence="1">3.5.4.16</ecNumber>
    </recommendedName>
</protein>
<evidence type="ECO:0000255" key="1">
    <source>
        <dbReference type="HAMAP-Rule" id="MF_01527"/>
    </source>
</evidence>
<accession>B9DKT0</accession>
<sequence length="292" mass="33182">MSEFDLTTREGRWRHFGSVDPIEGTKPTVKEEMTDLQSTHKDFLFEIEEVGIKNLVYPVVIDNYQTAGTFAFSTSLTREEKGINMSRILESVEKHYDNGLELSFNNLEAVLHTLEKHMKQSSAGVDVSGKWFFNRYSPVTNIKAVGNADVTYGLAVAGDQVTRKELTVQATVTTLCPCSKEISEYSAHNQRGVITVKMYIDPSATLPTDYKEVILDAMEANASSILYPILKRPDEKRVTERAYENPRFVEDLIRLIAADLVELDWAEGFDIECRNEESIHQHDAFAKLKYRK</sequence>
<organism>
    <name type="scientific">Staphylococcus carnosus (strain TM300)</name>
    <dbReference type="NCBI Taxonomy" id="396513"/>
    <lineage>
        <taxon>Bacteria</taxon>
        <taxon>Bacillati</taxon>
        <taxon>Bacillota</taxon>
        <taxon>Bacilli</taxon>
        <taxon>Bacillales</taxon>
        <taxon>Staphylococcaceae</taxon>
        <taxon>Staphylococcus</taxon>
    </lineage>
</organism>
<comment type="function">
    <text evidence="1">Converts GTP to 7,8-dihydroneopterin triphosphate.</text>
</comment>
<comment type="catalytic activity">
    <reaction evidence="1">
        <text>GTP + H2O = 7,8-dihydroneopterin 3'-triphosphate + formate + H(+)</text>
        <dbReference type="Rhea" id="RHEA:17473"/>
        <dbReference type="ChEBI" id="CHEBI:15377"/>
        <dbReference type="ChEBI" id="CHEBI:15378"/>
        <dbReference type="ChEBI" id="CHEBI:15740"/>
        <dbReference type="ChEBI" id="CHEBI:37565"/>
        <dbReference type="ChEBI" id="CHEBI:58462"/>
        <dbReference type="EC" id="3.5.4.16"/>
    </reaction>
</comment>
<comment type="pathway">
    <text evidence="1">Cofactor biosynthesis; 7,8-dihydroneopterin triphosphate biosynthesis; 7,8-dihydroneopterin triphosphate from GTP: step 1/1.</text>
</comment>
<comment type="similarity">
    <text evidence="1">Belongs to the GTP cyclohydrolase IV family.</text>
</comment>
<name>GCH4_STACT</name>
<gene>
    <name evidence="1" type="primary">folE2</name>
    <name type="ordered locus">Sca_0230</name>
</gene>
<dbReference type="EC" id="3.5.4.16" evidence="1"/>
<dbReference type="EMBL" id="AM295250">
    <property type="protein sequence ID" value="CAL27143.1"/>
    <property type="molecule type" value="Genomic_DNA"/>
</dbReference>
<dbReference type="RefSeq" id="WP_012664258.1">
    <property type="nucleotide sequence ID" value="NC_012121.1"/>
</dbReference>
<dbReference type="SMR" id="B9DKT0"/>
<dbReference type="GeneID" id="93795159"/>
<dbReference type="KEGG" id="sca:SCA_0230"/>
<dbReference type="eggNOG" id="COG1469">
    <property type="taxonomic scope" value="Bacteria"/>
</dbReference>
<dbReference type="HOGENOM" id="CLU_062816_1_1_9"/>
<dbReference type="OrthoDB" id="9774824at2"/>
<dbReference type="BioCyc" id="SCAR396513:SCA_RS01175-MONOMER"/>
<dbReference type="UniPathway" id="UPA00848">
    <property type="reaction ID" value="UER00151"/>
</dbReference>
<dbReference type="Proteomes" id="UP000000444">
    <property type="component" value="Chromosome"/>
</dbReference>
<dbReference type="GO" id="GO:0003934">
    <property type="term" value="F:GTP cyclohydrolase I activity"/>
    <property type="evidence" value="ECO:0007669"/>
    <property type="project" value="UniProtKB-UniRule"/>
</dbReference>
<dbReference type="GO" id="GO:0046654">
    <property type="term" value="P:tetrahydrofolate biosynthetic process"/>
    <property type="evidence" value="ECO:0007669"/>
    <property type="project" value="UniProtKB-UniRule"/>
</dbReference>
<dbReference type="Gene3D" id="3.10.270.10">
    <property type="entry name" value="Urate Oxidase"/>
    <property type="match status" value="1"/>
</dbReference>
<dbReference type="HAMAP" id="MF_01527_B">
    <property type="entry name" value="GTP_cyclohydrol_B"/>
    <property type="match status" value="1"/>
</dbReference>
<dbReference type="InterPro" id="IPR022838">
    <property type="entry name" value="GTP_cyclohydrolase_FolE2"/>
</dbReference>
<dbReference type="InterPro" id="IPR003801">
    <property type="entry name" value="GTP_cyclohydrolase_FolE2/MptA"/>
</dbReference>
<dbReference type="NCBIfam" id="NF010200">
    <property type="entry name" value="PRK13674.1-1"/>
    <property type="match status" value="1"/>
</dbReference>
<dbReference type="PANTHER" id="PTHR36445">
    <property type="entry name" value="GTP CYCLOHYDROLASE MPTA"/>
    <property type="match status" value="1"/>
</dbReference>
<dbReference type="PANTHER" id="PTHR36445:SF1">
    <property type="entry name" value="GTP CYCLOHYDROLASE MPTA"/>
    <property type="match status" value="1"/>
</dbReference>
<dbReference type="Pfam" id="PF02649">
    <property type="entry name" value="GCHY-1"/>
    <property type="match status" value="1"/>
</dbReference>
<reference key="1">
    <citation type="journal article" date="2009" name="Appl. Environ. Microbiol.">
        <title>Genome analysis of the meat starter culture bacterium Staphylococcus carnosus TM300.</title>
        <authorList>
            <person name="Rosenstein R."/>
            <person name="Nerz C."/>
            <person name="Biswas L."/>
            <person name="Resch A."/>
            <person name="Raddatz G."/>
            <person name="Schuster S.C."/>
            <person name="Goetz F."/>
        </authorList>
    </citation>
    <scope>NUCLEOTIDE SEQUENCE [LARGE SCALE GENOMIC DNA]</scope>
    <source>
        <strain>TM300</strain>
    </source>
</reference>
<keyword id="KW-0378">Hydrolase</keyword>
<keyword id="KW-1185">Reference proteome</keyword>
<proteinExistence type="inferred from homology"/>